<accession>A2RI75</accession>
<accession>Q93QH6</accession>
<sequence>MVKYILKRLGLLLLTLFLIVTLTFFMMQVMPGTPFSNPKLTPDQLEILKHAYGLDKPLWQQYFIYVGHMFTGNFGTSFIYTNQPVITMIAQRLPVSMQLGTQALILGTVLGALMGKASARRKNGLLDGIFGFLSVLGISVPSFVIGTLILLYLGFNLNLFPISGWGTFSQTIMPTIALSFAPMAVVTRFVRSEMIESLSSDYILLARAKGLSEKEVVNKHALRNSLIPMLTLIGPMAAGLLTGSVLIEKIFSIPGIGAQFVDSIPAKDFPVIMATTIVYAVILMVFILVTDILTAIVDPRVRL</sequence>
<protein>
    <recommendedName>
        <fullName evidence="5">Dipeptide transport system permease protein DppB</fullName>
    </recommendedName>
</protein>
<comment type="function">
    <text evidence="3 5">Part of the ABC transporter DppABCDF involved in dipeptide transport (PubMed:11409543). Responsible for the translocation of the substrate across the membrane (Probable).</text>
</comment>
<comment type="subunit">
    <text evidence="6">The complex is composed of two ATP-binding proteins (DppD and DppF), two transmembrane proteins (DppB and DppC) and a solute-binding protein (DppA).</text>
</comment>
<comment type="subcellular location">
    <subcellularLocation>
        <location evidence="5">Cell membrane</location>
        <topology evidence="1">Multi-pass membrane protein</topology>
    </subcellularLocation>
</comment>
<comment type="disruption phenotype">
    <text evidence="3">Inactivation of the gene impairs growth on low concentrations of di-valine.</text>
</comment>
<comment type="similarity">
    <text evidence="5">Belongs to the binding-protein-dependent transport system permease family. OppBC subfamily.</text>
</comment>
<comment type="sequence caution" evidence="5">
    <conflict type="erroneous initiation">
        <sequence resource="EMBL-CDS" id="AAK58898"/>
    </conflict>
    <text>Truncated N-terminus.</text>
</comment>
<keyword id="KW-1003">Cell membrane</keyword>
<keyword id="KW-0472">Membrane</keyword>
<keyword id="KW-0571">Peptide transport</keyword>
<keyword id="KW-0653">Protein transport</keyword>
<keyword id="KW-0812">Transmembrane</keyword>
<keyword id="KW-1133">Transmembrane helix</keyword>
<keyword id="KW-0813">Transport</keyword>
<evidence type="ECO:0000255" key="1"/>
<evidence type="ECO:0000255" key="2">
    <source>
        <dbReference type="PROSITE-ProRule" id="PRU00441"/>
    </source>
</evidence>
<evidence type="ECO:0000269" key="3">
    <source>
    </source>
</evidence>
<evidence type="ECO:0000303" key="4">
    <source>
    </source>
</evidence>
<evidence type="ECO:0000305" key="5"/>
<evidence type="ECO:0000305" key="6">
    <source>
    </source>
</evidence>
<evidence type="ECO:0000312" key="7">
    <source>
        <dbReference type="EMBL" id="CAL96969.1"/>
    </source>
</evidence>
<dbReference type="EMBL" id="AF247635">
    <property type="protein sequence ID" value="AAK58898.1"/>
    <property type="status" value="ALT_INIT"/>
    <property type="molecule type" value="Genomic_DNA"/>
</dbReference>
<dbReference type="EMBL" id="AM406671">
    <property type="protein sequence ID" value="CAL96969.1"/>
    <property type="molecule type" value="Genomic_DNA"/>
</dbReference>
<dbReference type="RefSeq" id="WP_011834421.1">
    <property type="nucleotide sequence ID" value="NC_009004.1"/>
</dbReference>
<dbReference type="SMR" id="A2RI75"/>
<dbReference type="STRING" id="416870.llmg_0364"/>
<dbReference type="GeneID" id="61108668"/>
<dbReference type="KEGG" id="llm:llmg_0364"/>
<dbReference type="eggNOG" id="COG0601">
    <property type="taxonomic scope" value="Bacteria"/>
</dbReference>
<dbReference type="HOGENOM" id="CLU_036879_1_2_9"/>
<dbReference type="OrthoDB" id="9773683at2"/>
<dbReference type="PhylomeDB" id="A2RI75"/>
<dbReference type="Proteomes" id="UP000000364">
    <property type="component" value="Chromosome"/>
</dbReference>
<dbReference type="GO" id="GO:0005886">
    <property type="term" value="C:plasma membrane"/>
    <property type="evidence" value="ECO:0007669"/>
    <property type="project" value="UniProtKB-SubCell"/>
</dbReference>
<dbReference type="GO" id="GO:0015833">
    <property type="term" value="P:peptide transport"/>
    <property type="evidence" value="ECO:0007669"/>
    <property type="project" value="UniProtKB-KW"/>
</dbReference>
<dbReference type="GO" id="GO:0015031">
    <property type="term" value="P:protein transport"/>
    <property type="evidence" value="ECO:0007669"/>
    <property type="project" value="UniProtKB-KW"/>
</dbReference>
<dbReference type="GO" id="GO:0055085">
    <property type="term" value="P:transmembrane transport"/>
    <property type="evidence" value="ECO:0007669"/>
    <property type="project" value="InterPro"/>
</dbReference>
<dbReference type="CDD" id="cd06261">
    <property type="entry name" value="TM_PBP2"/>
    <property type="match status" value="1"/>
</dbReference>
<dbReference type="Gene3D" id="1.10.3720.10">
    <property type="entry name" value="MetI-like"/>
    <property type="match status" value="1"/>
</dbReference>
<dbReference type="InterPro" id="IPR045621">
    <property type="entry name" value="BPD_transp_1_N"/>
</dbReference>
<dbReference type="InterPro" id="IPR000515">
    <property type="entry name" value="MetI-like"/>
</dbReference>
<dbReference type="InterPro" id="IPR035906">
    <property type="entry name" value="MetI-like_sf"/>
</dbReference>
<dbReference type="PANTHER" id="PTHR43163">
    <property type="entry name" value="DIPEPTIDE TRANSPORT SYSTEM PERMEASE PROTEIN DPPB-RELATED"/>
    <property type="match status" value="1"/>
</dbReference>
<dbReference type="PANTHER" id="PTHR43163:SF6">
    <property type="entry name" value="DIPEPTIDE TRANSPORT SYSTEM PERMEASE PROTEIN DPPB-RELATED"/>
    <property type="match status" value="1"/>
</dbReference>
<dbReference type="Pfam" id="PF00528">
    <property type="entry name" value="BPD_transp_1"/>
    <property type="match status" value="1"/>
</dbReference>
<dbReference type="Pfam" id="PF19300">
    <property type="entry name" value="BPD_transp_1_N"/>
    <property type="match status" value="1"/>
</dbReference>
<dbReference type="SUPFAM" id="SSF161098">
    <property type="entry name" value="MetI-like"/>
    <property type="match status" value="1"/>
</dbReference>
<dbReference type="PROSITE" id="PS50928">
    <property type="entry name" value="ABC_TM1"/>
    <property type="match status" value="1"/>
</dbReference>
<proteinExistence type="evidence at protein level"/>
<organism>
    <name type="scientific">Lactococcus lactis subsp. cremoris (strain MG1363)</name>
    <dbReference type="NCBI Taxonomy" id="416870"/>
    <lineage>
        <taxon>Bacteria</taxon>
        <taxon>Bacillati</taxon>
        <taxon>Bacillota</taxon>
        <taxon>Bacilli</taxon>
        <taxon>Lactobacillales</taxon>
        <taxon>Streptococcaceae</taxon>
        <taxon>Lactococcus</taxon>
        <taxon>Lactococcus cremoris subsp. cremoris</taxon>
    </lineage>
</organism>
<reference key="1">
    <citation type="journal article" date="2001" name="Arch. Microbiol.">
        <title>Genetic and functional characterization of dpp genes encoding a dipeptide transport system in Lactococcus lactis.</title>
        <authorList>
            <person name="Sanz Y."/>
            <person name="Lanfermeijer F.C."/>
            <person name="Renault P."/>
            <person name="Bolotin A."/>
            <person name="Konings W.N."/>
            <person name="Poolman B."/>
        </authorList>
    </citation>
    <scope>NUCLEOTIDE SEQUENCE [GENOMIC DNA]</scope>
    <scope>FUNCTION</scope>
    <scope>SUBUNIT</scope>
    <scope>DISRUPTION PHENOTYPE</scope>
    <source>
        <strain>MG1363</strain>
    </source>
</reference>
<reference key="2">
    <citation type="journal article" date="2007" name="J. Bacteriol.">
        <title>The complete genome sequence of the lactic acid bacterial paradigm Lactococcus lactis subsp. cremoris MG1363.</title>
        <authorList>
            <person name="Wegmann U."/>
            <person name="O'Connell-Motherway M."/>
            <person name="Zomer A."/>
            <person name="Buist G."/>
            <person name="Shearman C."/>
            <person name="Canchaya C."/>
            <person name="Ventura M."/>
            <person name="Goesmann A."/>
            <person name="Gasson M.J."/>
            <person name="Kuipers O.P."/>
            <person name="van Sinderen D."/>
            <person name="Kok J."/>
        </authorList>
    </citation>
    <scope>NUCLEOTIDE SEQUENCE [LARGE SCALE GENOMIC DNA]</scope>
    <source>
        <strain>MG1363</strain>
    </source>
</reference>
<gene>
    <name evidence="4" type="primary">dppB</name>
    <name evidence="7" type="ordered locus">llmg_0364</name>
</gene>
<feature type="chain" id="PRO_0000452193" description="Dipeptide transport system permease protein DppB">
    <location>
        <begin position="1"/>
        <end position="303"/>
    </location>
</feature>
<feature type="transmembrane region" description="Helical" evidence="1">
    <location>
        <begin position="9"/>
        <end position="29"/>
    </location>
</feature>
<feature type="transmembrane region" description="Helical" evidence="1">
    <location>
        <begin position="62"/>
        <end position="82"/>
    </location>
</feature>
<feature type="transmembrane region" description="Helical" evidence="1">
    <location>
        <begin position="93"/>
        <end position="113"/>
    </location>
</feature>
<feature type="transmembrane region" description="Helical" evidence="1">
    <location>
        <begin position="129"/>
        <end position="149"/>
    </location>
</feature>
<feature type="transmembrane region" description="Helical" evidence="1">
    <location>
        <begin position="166"/>
        <end position="186"/>
    </location>
</feature>
<feature type="transmembrane region" description="Helical" evidence="1">
    <location>
        <begin position="227"/>
        <end position="247"/>
    </location>
</feature>
<feature type="transmembrane region" description="Helical" evidence="1">
    <location>
        <begin position="269"/>
        <end position="289"/>
    </location>
</feature>
<feature type="domain" description="ABC transmembrane type-1" evidence="2">
    <location>
        <begin position="93"/>
        <end position="290"/>
    </location>
</feature>
<feature type="sequence conflict" description="In Ref. 1; AAK58898." evidence="5" ref="1">
    <original>DYI</original>
    <variation>ELH</variation>
    <location>
        <begin position="201"/>
        <end position="203"/>
    </location>
</feature>
<name>DPPB_LACLM</name>